<sequence length="218" mass="24906">MSNLSPEAIKVRNALVEKGIETPMIDLVQDKDQRRQGIEQHMREVIKLIGLDLSDDSLEETPARLSKMFIDEIFSGLDYANFPKITNIENRMKVSEMVLVDDVTLTSTCEHHFVTIDGKVSVAYYPQKWVIGLSKINRVVAFFAQRPQVQERLTQQILLAFQTILETEDVAVYVKATHFCVKCRGIKDTNSYTVTSAFGGVFLDDRETRKEFLTLLKK</sequence>
<reference key="1">
    <citation type="submission" date="2008-02" db="EMBL/GenBank/DDBJ databases">
        <title>Complete sequence of Haemophilus somnus 2336.</title>
        <authorList>
            <consortium name="US DOE Joint Genome Institute"/>
            <person name="Siddaramappa S."/>
            <person name="Duncan A.J."/>
            <person name="Challacombe J.F."/>
            <person name="Rainey D."/>
            <person name="Gillaspy A.F."/>
            <person name="Carson M."/>
            <person name="Gipson J."/>
            <person name="Gipson M."/>
            <person name="Bruce D."/>
            <person name="Detter J.C."/>
            <person name="Han C.S."/>
            <person name="Land M."/>
            <person name="Tapia R."/>
            <person name="Thompson L.S."/>
            <person name="Orvis J."/>
            <person name="Zaitshik J."/>
            <person name="Barnes G."/>
            <person name="Brettin T.S."/>
            <person name="Dyer D.W."/>
            <person name="Inzana T.J."/>
        </authorList>
    </citation>
    <scope>NUCLEOTIDE SEQUENCE [LARGE SCALE GENOMIC DNA]</scope>
    <source>
        <strain>2336</strain>
    </source>
</reference>
<protein>
    <recommendedName>
        <fullName evidence="1">GTP cyclohydrolase 1</fullName>
        <ecNumber evidence="1">3.5.4.16</ecNumber>
    </recommendedName>
    <alternativeName>
        <fullName evidence="1">GTP cyclohydrolase I</fullName>
        <shortName evidence="1">GTP-CH-I</shortName>
    </alternativeName>
</protein>
<feature type="chain" id="PRO_1000078143" description="GTP cyclohydrolase 1">
    <location>
        <begin position="1"/>
        <end position="218"/>
    </location>
</feature>
<feature type="binding site" evidence="1">
    <location>
        <position position="109"/>
    </location>
    <ligand>
        <name>Zn(2+)</name>
        <dbReference type="ChEBI" id="CHEBI:29105"/>
    </ligand>
</feature>
<feature type="binding site" evidence="1">
    <location>
        <position position="112"/>
    </location>
    <ligand>
        <name>Zn(2+)</name>
        <dbReference type="ChEBI" id="CHEBI:29105"/>
    </ligand>
</feature>
<feature type="binding site" evidence="1">
    <location>
        <position position="180"/>
    </location>
    <ligand>
        <name>Zn(2+)</name>
        <dbReference type="ChEBI" id="CHEBI:29105"/>
    </ligand>
</feature>
<keyword id="KW-0342">GTP-binding</keyword>
<keyword id="KW-0378">Hydrolase</keyword>
<keyword id="KW-0479">Metal-binding</keyword>
<keyword id="KW-0547">Nucleotide-binding</keyword>
<keyword id="KW-0554">One-carbon metabolism</keyword>
<keyword id="KW-0862">Zinc</keyword>
<dbReference type="EC" id="3.5.4.16" evidence="1"/>
<dbReference type="EMBL" id="CP000947">
    <property type="protein sequence ID" value="ACA31127.1"/>
    <property type="molecule type" value="Genomic_DNA"/>
</dbReference>
<dbReference type="RefSeq" id="WP_011609063.1">
    <property type="nucleotide sequence ID" value="NC_010519.1"/>
</dbReference>
<dbReference type="SMR" id="B0UUA9"/>
<dbReference type="STRING" id="228400.HSM_1388"/>
<dbReference type="GeneID" id="31487686"/>
<dbReference type="KEGG" id="hsm:HSM_1388"/>
<dbReference type="HOGENOM" id="CLU_049768_3_2_6"/>
<dbReference type="UniPathway" id="UPA00848">
    <property type="reaction ID" value="UER00151"/>
</dbReference>
<dbReference type="GO" id="GO:0005737">
    <property type="term" value="C:cytoplasm"/>
    <property type="evidence" value="ECO:0007669"/>
    <property type="project" value="TreeGrafter"/>
</dbReference>
<dbReference type="GO" id="GO:0005525">
    <property type="term" value="F:GTP binding"/>
    <property type="evidence" value="ECO:0007669"/>
    <property type="project" value="UniProtKB-KW"/>
</dbReference>
<dbReference type="GO" id="GO:0003934">
    <property type="term" value="F:GTP cyclohydrolase I activity"/>
    <property type="evidence" value="ECO:0007669"/>
    <property type="project" value="UniProtKB-UniRule"/>
</dbReference>
<dbReference type="GO" id="GO:0008270">
    <property type="term" value="F:zinc ion binding"/>
    <property type="evidence" value="ECO:0007669"/>
    <property type="project" value="UniProtKB-UniRule"/>
</dbReference>
<dbReference type="GO" id="GO:0006730">
    <property type="term" value="P:one-carbon metabolic process"/>
    <property type="evidence" value="ECO:0007669"/>
    <property type="project" value="UniProtKB-UniRule"/>
</dbReference>
<dbReference type="GO" id="GO:0006729">
    <property type="term" value="P:tetrahydrobiopterin biosynthetic process"/>
    <property type="evidence" value="ECO:0007669"/>
    <property type="project" value="TreeGrafter"/>
</dbReference>
<dbReference type="GO" id="GO:0046654">
    <property type="term" value="P:tetrahydrofolate biosynthetic process"/>
    <property type="evidence" value="ECO:0007669"/>
    <property type="project" value="UniProtKB-UniRule"/>
</dbReference>
<dbReference type="FunFam" id="3.30.1130.10:FF:000001">
    <property type="entry name" value="GTP cyclohydrolase 1"/>
    <property type="match status" value="1"/>
</dbReference>
<dbReference type="Gene3D" id="1.10.286.10">
    <property type="match status" value="1"/>
</dbReference>
<dbReference type="Gene3D" id="3.30.1130.10">
    <property type="match status" value="1"/>
</dbReference>
<dbReference type="HAMAP" id="MF_00223">
    <property type="entry name" value="FolE"/>
    <property type="match status" value="1"/>
</dbReference>
<dbReference type="InterPro" id="IPR043133">
    <property type="entry name" value="GTP-CH-I_C/QueF"/>
</dbReference>
<dbReference type="InterPro" id="IPR043134">
    <property type="entry name" value="GTP-CH-I_N"/>
</dbReference>
<dbReference type="InterPro" id="IPR001474">
    <property type="entry name" value="GTP_CycHdrlase_I"/>
</dbReference>
<dbReference type="InterPro" id="IPR018234">
    <property type="entry name" value="GTP_CycHdrlase_I_CS"/>
</dbReference>
<dbReference type="InterPro" id="IPR020602">
    <property type="entry name" value="GTP_CycHdrlase_I_dom"/>
</dbReference>
<dbReference type="NCBIfam" id="TIGR00063">
    <property type="entry name" value="folE"/>
    <property type="match status" value="1"/>
</dbReference>
<dbReference type="NCBIfam" id="NF006824">
    <property type="entry name" value="PRK09347.1-1"/>
    <property type="match status" value="1"/>
</dbReference>
<dbReference type="NCBIfam" id="NF006826">
    <property type="entry name" value="PRK09347.1-3"/>
    <property type="match status" value="1"/>
</dbReference>
<dbReference type="PANTHER" id="PTHR11109:SF7">
    <property type="entry name" value="GTP CYCLOHYDROLASE 1"/>
    <property type="match status" value="1"/>
</dbReference>
<dbReference type="PANTHER" id="PTHR11109">
    <property type="entry name" value="GTP CYCLOHYDROLASE I"/>
    <property type="match status" value="1"/>
</dbReference>
<dbReference type="Pfam" id="PF01227">
    <property type="entry name" value="GTP_cyclohydroI"/>
    <property type="match status" value="1"/>
</dbReference>
<dbReference type="SUPFAM" id="SSF55620">
    <property type="entry name" value="Tetrahydrobiopterin biosynthesis enzymes-like"/>
    <property type="match status" value="1"/>
</dbReference>
<dbReference type="PROSITE" id="PS00859">
    <property type="entry name" value="GTP_CYCLOHYDROL_1_1"/>
    <property type="match status" value="1"/>
</dbReference>
<dbReference type="PROSITE" id="PS00860">
    <property type="entry name" value="GTP_CYCLOHYDROL_1_2"/>
    <property type="match status" value="1"/>
</dbReference>
<organism>
    <name type="scientific">Histophilus somni (strain 2336)</name>
    <name type="common">Haemophilus somnus</name>
    <dbReference type="NCBI Taxonomy" id="228400"/>
    <lineage>
        <taxon>Bacteria</taxon>
        <taxon>Pseudomonadati</taxon>
        <taxon>Pseudomonadota</taxon>
        <taxon>Gammaproteobacteria</taxon>
        <taxon>Pasteurellales</taxon>
        <taxon>Pasteurellaceae</taxon>
        <taxon>Histophilus</taxon>
    </lineage>
</organism>
<comment type="catalytic activity">
    <reaction evidence="1">
        <text>GTP + H2O = 7,8-dihydroneopterin 3'-triphosphate + formate + H(+)</text>
        <dbReference type="Rhea" id="RHEA:17473"/>
        <dbReference type="ChEBI" id="CHEBI:15377"/>
        <dbReference type="ChEBI" id="CHEBI:15378"/>
        <dbReference type="ChEBI" id="CHEBI:15740"/>
        <dbReference type="ChEBI" id="CHEBI:37565"/>
        <dbReference type="ChEBI" id="CHEBI:58462"/>
        <dbReference type="EC" id="3.5.4.16"/>
    </reaction>
</comment>
<comment type="pathway">
    <text evidence="1">Cofactor biosynthesis; 7,8-dihydroneopterin triphosphate biosynthesis; 7,8-dihydroneopterin triphosphate from GTP: step 1/1.</text>
</comment>
<comment type="subunit">
    <text evidence="1">Homomer.</text>
</comment>
<comment type="similarity">
    <text evidence="1">Belongs to the GTP cyclohydrolase I family.</text>
</comment>
<accession>B0UUA9</accession>
<evidence type="ECO:0000255" key="1">
    <source>
        <dbReference type="HAMAP-Rule" id="MF_00223"/>
    </source>
</evidence>
<name>GCH1_HISS2</name>
<gene>
    <name evidence="1" type="primary">folE</name>
    <name type="ordered locus">HSM_1388</name>
</gene>
<proteinExistence type="inferred from homology"/>